<feature type="chain" id="PRO_1000057967" description="Phosphoglycerate kinase">
    <location>
        <begin position="1"/>
        <end position="394"/>
    </location>
</feature>
<feature type="binding site" evidence="1">
    <location>
        <begin position="21"/>
        <end position="23"/>
    </location>
    <ligand>
        <name>substrate</name>
    </ligand>
</feature>
<feature type="binding site" evidence="1">
    <location>
        <position position="36"/>
    </location>
    <ligand>
        <name>substrate</name>
    </ligand>
</feature>
<feature type="binding site" evidence="1">
    <location>
        <begin position="59"/>
        <end position="62"/>
    </location>
    <ligand>
        <name>substrate</name>
    </ligand>
</feature>
<feature type="binding site" evidence="1">
    <location>
        <position position="118"/>
    </location>
    <ligand>
        <name>substrate</name>
    </ligand>
</feature>
<feature type="binding site" evidence="1">
    <location>
        <position position="151"/>
    </location>
    <ligand>
        <name>substrate</name>
    </ligand>
</feature>
<feature type="binding site" evidence="1">
    <location>
        <position position="201"/>
    </location>
    <ligand>
        <name>ATP</name>
        <dbReference type="ChEBI" id="CHEBI:30616"/>
    </ligand>
</feature>
<feature type="binding site" evidence="1">
    <location>
        <position position="323"/>
    </location>
    <ligand>
        <name>ATP</name>
        <dbReference type="ChEBI" id="CHEBI:30616"/>
    </ligand>
</feature>
<feature type="binding site" evidence="1">
    <location>
        <begin position="350"/>
        <end position="353"/>
    </location>
    <ligand>
        <name>ATP</name>
        <dbReference type="ChEBI" id="CHEBI:30616"/>
    </ligand>
</feature>
<feature type="modified residue" description="Phosphoserine" evidence="1">
    <location>
        <position position="183"/>
    </location>
</feature>
<feature type="modified residue" description="Phosphothreonine" evidence="1">
    <location>
        <position position="299"/>
    </location>
</feature>
<sequence length="394" mass="42211">MNKKSVKDIDVKGKVVFCRVDFNVPMKDGKVTDDTRIRAALPTIEYLTGQGAKVLLASHLGRPKGQVTEELRLTPVAKRLQELLGQEVKKADEAYGDNVKKQISDLKDGDVLVLENVRFYPGEEKNDPELSKAFADLADVYVNDAFGAAHRAHASTAGIAAYLPAVSGFLMQKELEVLGKAISNPDRPFTAIIGGAKVKDKIGVIESLLDKVDNLIIGGGLAYTFVKALGHEVGKSLLEEDKVDLAKSFMDRAKEKGVNFLIPTDVLVADDFSNDANTSIVPISEIPSDLEALDIGTETREKYADVIKNSKLVVWNGPMGVFEIDAFAKGTKAIAEALAEAKDTYSVIGGGDSAAAVEKFGLADQMSHISTGGGASLEFMEGKELPGVTALNDK</sequence>
<keyword id="KW-0067">ATP-binding</keyword>
<keyword id="KW-0963">Cytoplasm</keyword>
<keyword id="KW-0324">Glycolysis</keyword>
<keyword id="KW-0418">Kinase</keyword>
<keyword id="KW-0547">Nucleotide-binding</keyword>
<keyword id="KW-0597">Phosphoprotein</keyword>
<keyword id="KW-0808">Transferase</keyword>
<comment type="catalytic activity">
    <reaction evidence="1">
        <text>(2R)-3-phosphoglycerate + ATP = (2R)-3-phospho-glyceroyl phosphate + ADP</text>
        <dbReference type="Rhea" id="RHEA:14801"/>
        <dbReference type="ChEBI" id="CHEBI:30616"/>
        <dbReference type="ChEBI" id="CHEBI:57604"/>
        <dbReference type="ChEBI" id="CHEBI:58272"/>
        <dbReference type="ChEBI" id="CHEBI:456216"/>
        <dbReference type="EC" id="2.7.2.3"/>
    </reaction>
</comment>
<comment type="pathway">
    <text evidence="1">Carbohydrate degradation; glycolysis; pyruvate from D-glyceraldehyde 3-phosphate: step 2/5.</text>
</comment>
<comment type="subunit">
    <text evidence="1">Monomer.</text>
</comment>
<comment type="subcellular location">
    <subcellularLocation>
        <location evidence="1">Cytoplasm</location>
    </subcellularLocation>
</comment>
<comment type="similarity">
    <text evidence="1">Belongs to the phosphoglycerate kinase family.</text>
</comment>
<organism>
    <name type="scientific">Bacillus pumilus (strain SAFR-032)</name>
    <dbReference type="NCBI Taxonomy" id="315750"/>
    <lineage>
        <taxon>Bacteria</taxon>
        <taxon>Bacillati</taxon>
        <taxon>Bacillota</taxon>
        <taxon>Bacilli</taxon>
        <taxon>Bacillales</taxon>
        <taxon>Bacillaceae</taxon>
        <taxon>Bacillus</taxon>
    </lineage>
</organism>
<proteinExistence type="inferred from homology"/>
<protein>
    <recommendedName>
        <fullName evidence="1">Phosphoglycerate kinase</fullName>
        <ecNumber evidence="1">2.7.2.3</ecNumber>
    </recommendedName>
</protein>
<name>PGK_BACP2</name>
<accession>A8FHJ3</accession>
<evidence type="ECO:0000255" key="1">
    <source>
        <dbReference type="HAMAP-Rule" id="MF_00145"/>
    </source>
</evidence>
<gene>
    <name evidence="1" type="primary">pgk</name>
    <name type="ordered locus">BPUM_3056</name>
</gene>
<reference key="1">
    <citation type="journal article" date="2007" name="PLoS ONE">
        <title>Paradoxical DNA repair and peroxide resistance gene conservation in Bacillus pumilus SAFR-032.</title>
        <authorList>
            <person name="Gioia J."/>
            <person name="Yerrapragada S."/>
            <person name="Qin X."/>
            <person name="Jiang H."/>
            <person name="Igboeli O.C."/>
            <person name="Muzny D."/>
            <person name="Dugan-Rocha S."/>
            <person name="Ding Y."/>
            <person name="Hawes A."/>
            <person name="Liu W."/>
            <person name="Perez L."/>
            <person name="Kovar C."/>
            <person name="Dinh H."/>
            <person name="Lee S."/>
            <person name="Nazareth L."/>
            <person name="Blyth P."/>
            <person name="Holder M."/>
            <person name="Buhay C."/>
            <person name="Tirumalai M.R."/>
            <person name="Liu Y."/>
            <person name="Dasgupta I."/>
            <person name="Bokhetache L."/>
            <person name="Fujita M."/>
            <person name="Karouia F."/>
            <person name="Eswara Moorthy P."/>
            <person name="Siefert J."/>
            <person name="Uzman A."/>
            <person name="Buzumbo P."/>
            <person name="Verma A."/>
            <person name="Zwiya H."/>
            <person name="McWilliams B.D."/>
            <person name="Olowu A."/>
            <person name="Clinkenbeard K.D."/>
            <person name="Newcombe D."/>
            <person name="Golebiewski L."/>
            <person name="Petrosino J.F."/>
            <person name="Nicholson W.L."/>
            <person name="Fox G.E."/>
            <person name="Venkateswaran K."/>
            <person name="Highlander S.K."/>
            <person name="Weinstock G.M."/>
        </authorList>
    </citation>
    <scope>NUCLEOTIDE SEQUENCE [LARGE SCALE GENOMIC DNA]</scope>
    <source>
        <strain>SAFR-032</strain>
    </source>
</reference>
<dbReference type="EC" id="2.7.2.3" evidence="1"/>
<dbReference type="EMBL" id="CP000813">
    <property type="protein sequence ID" value="ABV63710.1"/>
    <property type="molecule type" value="Genomic_DNA"/>
</dbReference>
<dbReference type="RefSeq" id="WP_012011303.1">
    <property type="nucleotide sequence ID" value="NZ_VEAS01000001.1"/>
</dbReference>
<dbReference type="SMR" id="A8FHJ3"/>
<dbReference type="STRING" id="315750.BPUM_3056"/>
<dbReference type="GeneID" id="5622346"/>
<dbReference type="KEGG" id="bpu:BPUM_3056"/>
<dbReference type="eggNOG" id="COG0126">
    <property type="taxonomic scope" value="Bacteria"/>
</dbReference>
<dbReference type="HOGENOM" id="CLU_025427_0_2_9"/>
<dbReference type="OrthoDB" id="9808460at2"/>
<dbReference type="UniPathway" id="UPA00109">
    <property type="reaction ID" value="UER00185"/>
</dbReference>
<dbReference type="Proteomes" id="UP000001355">
    <property type="component" value="Chromosome"/>
</dbReference>
<dbReference type="GO" id="GO:0005829">
    <property type="term" value="C:cytosol"/>
    <property type="evidence" value="ECO:0007669"/>
    <property type="project" value="TreeGrafter"/>
</dbReference>
<dbReference type="GO" id="GO:0043531">
    <property type="term" value="F:ADP binding"/>
    <property type="evidence" value="ECO:0007669"/>
    <property type="project" value="TreeGrafter"/>
</dbReference>
<dbReference type="GO" id="GO:0005524">
    <property type="term" value="F:ATP binding"/>
    <property type="evidence" value="ECO:0007669"/>
    <property type="project" value="UniProtKB-KW"/>
</dbReference>
<dbReference type="GO" id="GO:0004618">
    <property type="term" value="F:phosphoglycerate kinase activity"/>
    <property type="evidence" value="ECO:0007669"/>
    <property type="project" value="UniProtKB-UniRule"/>
</dbReference>
<dbReference type="GO" id="GO:0006094">
    <property type="term" value="P:gluconeogenesis"/>
    <property type="evidence" value="ECO:0007669"/>
    <property type="project" value="TreeGrafter"/>
</dbReference>
<dbReference type="GO" id="GO:0006096">
    <property type="term" value="P:glycolytic process"/>
    <property type="evidence" value="ECO:0007669"/>
    <property type="project" value="UniProtKB-UniRule"/>
</dbReference>
<dbReference type="CDD" id="cd00318">
    <property type="entry name" value="Phosphoglycerate_kinase"/>
    <property type="match status" value="1"/>
</dbReference>
<dbReference type="FunFam" id="3.40.50.1260:FF:000001">
    <property type="entry name" value="Phosphoglycerate kinase"/>
    <property type="match status" value="1"/>
</dbReference>
<dbReference type="FunFam" id="3.40.50.1260:FF:000002">
    <property type="entry name" value="Phosphoglycerate kinase"/>
    <property type="match status" value="1"/>
</dbReference>
<dbReference type="Gene3D" id="3.40.50.1260">
    <property type="entry name" value="Phosphoglycerate kinase, N-terminal domain"/>
    <property type="match status" value="2"/>
</dbReference>
<dbReference type="HAMAP" id="MF_00145">
    <property type="entry name" value="Phosphoglyc_kinase"/>
    <property type="match status" value="1"/>
</dbReference>
<dbReference type="InterPro" id="IPR001576">
    <property type="entry name" value="Phosphoglycerate_kinase"/>
</dbReference>
<dbReference type="InterPro" id="IPR015911">
    <property type="entry name" value="Phosphoglycerate_kinase_CS"/>
</dbReference>
<dbReference type="InterPro" id="IPR015824">
    <property type="entry name" value="Phosphoglycerate_kinase_N"/>
</dbReference>
<dbReference type="InterPro" id="IPR036043">
    <property type="entry name" value="Phosphoglycerate_kinase_sf"/>
</dbReference>
<dbReference type="PANTHER" id="PTHR11406">
    <property type="entry name" value="PHOSPHOGLYCERATE KINASE"/>
    <property type="match status" value="1"/>
</dbReference>
<dbReference type="PANTHER" id="PTHR11406:SF23">
    <property type="entry name" value="PHOSPHOGLYCERATE KINASE 1, CHLOROPLASTIC-RELATED"/>
    <property type="match status" value="1"/>
</dbReference>
<dbReference type="Pfam" id="PF00162">
    <property type="entry name" value="PGK"/>
    <property type="match status" value="1"/>
</dbReference>
<dbReference type="PIRSF" id="PIRSF000724">
    <property type="entry name" value="Pgk"/>
    <property type="match status" value="1"/>
</dbReference>
<dbReference type="PRINTS" id="PR00477">
    <property type="entry name" value="PHGLYCKINASE"/>
</dbReference>
<dbReference type="SUPFAM" id="SSF53748">
    <property type="entry name" value="Phosphoglycerate kinase"/>
    <property type="match status" value="1"/>
</dbReference>
<dbReference type="PROSITE" id="PS00111">
    <property type="entry name" value="PGLYCERATE_KINASE"/>
    <property type="match status" value="1"/>
</dbReference>